<keyword id="KW-0687">Ribonucleoprotein</keyword>
<keyword id="KW-0689">Ribosomal protein</keyword>
<keyword id="KW-0694">RNA-binding</keyword>
<keyword id="KW-0699">rRNA-binding</keyword>
<keyword id="KW-0820">tRNA-binding</keyword>
<reference key="1">
    <citation type="submission" date="2007-05" db="EMBL/GenBank/DDBJ databases">
        <title>Complete sequence of chromosome of Staphylococcus aureus subsp. aureus JH9.</title>
        <authorList>
            <consortium name="US DOE Joint Genome Institute"/>
            <person name="Copeland A."/>
            <person name="Lucas S."/>
            <person name="Lapidus A."/>
            <person name="Barry K."/>
            <person name="Detter J.C."/>
            <person name="Glavina del Rio T."/>
            <person name="Hammon N."/>
            <person name="Israni S."/>
            <person name="Pitluck S."/>
            <person name="Chain P."/>
            <person name="Malfatti S."/>
            <person name="Shin M."/>
            <person name="Vergez L."/>
            <person name="Schmutz J."/>
            <person name="Larimer F."/>
            <person name="Land M."/>
            <person name="Hauser L."/>
            <person name="Kyrpides N."/>
            <person name="Kim E."/>
            <person name="Tomasz A."/>
            <person name="Richardson P."/>
        </authorList>
    </citation>
    <scope>NUCLEOTIDE SEQUENCE [LARGE SCALE GENOMIC DNA]</scope>
    <source>
        <strain>JH9</strain>
    </source>
</reference>
<proteinExistence type="inferred from homology"/>
<evidence type="ECO:0000255" key="1">
    <source>
        <dbReference type="HAMAP-Rule" id="MF_01333"/>
    </source>
</evidence>
<evidence type="ECO:0000305" key="2"/>
<gene>
    <name evidence="1" type="primary">rplE</name>
    <name type="ordered locus">SaurJH9_2265</name>
</gene>
<sequence length="179" mass="20267">MNRLKEKFNTEVTENLMKKFNYSSVMEVPKIDKIVVNMGVGDAVQNSKVLDNAVEELELITGQKPLVTKAKKSIATFRLREGMPIGAKVTLRGERMYEFLDKLISVSLPRVRDFQGVSKKAFDGRGNYTLGVKEQLIFPEIDYDKVSKVRGMDIVIVTTANTDEEARELLANFGMPFRK</sequence>
<accession>A5IV22</accession>
<feature type="chain" id="PRO_1000086612" description="Large ribosomal subunit protein uL5">
    <location>
        <begin position="1"/>
        <end position="179"/>
    </location>
</feature>
<organism>
    <name type="scientific">Staphylococcus aureus (strain JH9)</name>
    <dbReference type="NCBI Taxonomy" id="359786"/>
    <lineage>
        <taxon>Bacteria</taxon>
        <taxon>Bacillati</taxon>
        <taxon>Bacillota</taxon>
        <taxon>Bacilli</taxon>
        <taxon>Bacillales</taxon>
        <taxon>Staphylococcaceae</taxon>
        <taxon>Staphylococcus</taxon>
    </lineage>
</organism>
<dbReference type="EMBL" id="CP000703">
    <property type="protein sequence ID" value="ABQ50045.1"/>
    <property type="molecule type" value="Genomic_DNA"/>
</dbReference>
<dbReference type="RefSeq" id="WP_001080824.1">
    <property type="nucleotide sequence ID" value="NC_009487.1"/>
</dbReference>
<dbReference type="SMR" id="A5IV22"/>
<dbReference type="KEGG" id="saj:SaurJH9_2265"/>
<dbReference type="HOGENOM" id="CLU_061015_2_1_9"/>
<dbReference type="GO" id="GO:1990904">
    <property type="term" value="C:ribonucleoprotein complex"/>
    <property type="evidence" value="ECO:0007669"/>
    <property type="project" value="UniProtKB-KW"/>
</dbReference>
<dbReference type="GO" id="GO:0005840">
    <property type="term" value="C:ribosome"/>
    <property type="evidence" value="ECO:0007669"/>
    <property type="project" value="UniProtKB-KW"/>
</dbReference>
<dbReference type="GO" id="GO:0019843">
    <property type="term" value="F:rRNA binding"/>
    <property type="evidence" value="ECO:0007669"/>
    <property type="project" value="UniProtKB-UniRule"/>
</dbReference>
<dbReference type="GO" id="GO:0003735">
    <property type="term" value="F:structural constituent of ribosome"/>
    <property type="evidence" value="ECO:0007669"/>
    <property type="project" value="InterPro"/>
</dbReference>
<dbReference type="GO" id="GO:0000049">
    <property type="term" value="F:tRNA binding"/>
    <property type="evidence" value="ECO:0007669"/>
    <property type="project" value="UniProtKB-UniRule"/>
</dbReference>
<dbReference type="GO" id="GO:0006412">
    <property type="term" value="P:translation"/>
    <property type="evidence" value="ECO:0007669"/>
    <property type="project" value="UniProtKB-UniRule"/>
</dbReference>
<dbReference type="FunFam" id="3.30.1440.10:FF:000001">
    <property type="entry name" value="50S ribosomal protein L5"/>
    <property type="match status" value="1"/>
</dbReference>
<dbReference type="Gene3D" id="3.30.1440.10">
    <property type="match status" value="1"/>
</dbReference>
<dbReference type="HAMAP" id="MF_01333_B">
    <property type="entry name" value="Ribosomal_uL5_B"/>
    <property type="match status" value="1"/>
</dbReference>
<dbReference type="InterPro" id="IPR002132">
    <property type="entry name" value="Ribosomal_uL5"/>
</dbReference>
<dbReference type="InterPro" id="IPR020930">
    <property type="entry name" value="Ribosomal_uL5_bac-type"/>
</dbReference>
<dbReference type="InterPro" id="IPR031309">
    <property type="entry name" value="Ribosomal_uL5_C"/>
</dbReference>
<dbReference type="InterPro" id="IPR020929">
    <property type="entry name" value="Ribosomal_uL5_CS"/>
</dbReference>
<dbReference type="InterPro" id="IPR022803">
    <property type="entry name" value="Ribosomal_uL5_dom_sf"/>
</dbReference>
<dbReference type="InterPro" id="IPR031310">
    <property type="entry name" value="Ribosomal_uL5_N"/>
</dbReference>
<dbReference type="NCBIfam" id="NF000585">
    <property type="entry name" value="PRK00010.1"/>
    <property type="match status" value="1"/>
</dbReference>
<dbReference type="PANTHER" id="PTHR11994">
    <property type="entry name" value="60S RIBOSOMAL PROTEIN L11-RELATED"/>
    <property type="match status" value="1"/>
</dbReference>
<dbReference type="Pfam" id="PF00281">
    <property type="entry name" value="Ribosomal_L5"/>
    <property type="match status" value="1"/>
</dbReference>
<dbReference type="Pfam" id="PF00673">
    <property type="entry name" value="Ribosomal_L5_C"/>
    <property type="match status" value="1"/>
</dbReference>
<dbReference type="PIRSF" id="PIRSF002161">
    <property type="entry name" value="Ribosomal_L5"/>
    <property type="match status" value="1"/>
</dbReference>
<dbReference type="SUPFAM" id="SSF55282">
    <property type="entry name" value="RL5-like"/>
    <property type="match status" value="1"/>
</dbReference>
<dbReference type="PROSITE" id="PS00358">
    <property type="entry name" value="RIBOSOMAL_L5"/>
    <property type="match status" value="1"/>
</dbReference>
<comment type="function">
    <text evidence="1">This is one of the proteins that bind and probably mediate the attachment of the 5S RNA into the large ribosomal subunit, where it forms part of the central protuberance. In the 70S ribosome it contacts protein S13 of the 30S subunit (bridge B1b), connecting the 2 subunits; this bridge is implicated in subunit movement. Contacts the P site tRNA; the 5S rRNA and some of its associated proteins might help stabilize positioning of ribosome-bound tRNAs.</text>
</comment>
<comment type="subunit">
    <text evidence="1">Part of the 50S ribosomal subunit; part of the 5S rRNA/L5/L18/L25 subcomplex. Contacts the 5S rRNA and the P site tRNA. Forms a bridge to the 30S subunit in the 70S ribosome.</text>
</comment>
<comment type="similarity">
    <text evidence="1">Belongs to the universal ribosomal protein uL5 family.</text>
</comment>
<protein>
    <recommendedName>
        <fullName evidence="1">Large ribosomal subunit protein uL5</fullName>
    </recommendedName>
    <alternativeName>
        <fullName evidence="2">50S ribosomal protein L5</fullName>
    </alternativeName>
</protein>
<name>RL5_STAA9</name>